<keyword id="KW-0963">Cytoplasm</keyword>
<keyword id="KW-0238">DNA-binding</keyword>
<name>Y038_CLOBJ</name>
<comment type="function">
    <text evidence="1">Binds to DNA and alters its conformation. May be involved in regulation of gene expression, nucleoid organization and DNA protection.</text>
</comment>
<comment type="subunit">
    <text evidence="1">Homodimer.</text>
</comment>
<comment type="subcellular location">
    <subcellularLocation>
        <location evidence="1">Cytoplasm</location>
        <location evidence="1">Nucleoid</location>
    </subcellularLocation>
</comment>
<comment type="similarity">
    <text evidence="1">Belongs to the YbaB/EbfC family.</text>
</comment>
<gene>
    <name type="ordered locus">CLM_0038</name>
</gene>
<dbReference type="EMBL" id="CP001581">
    <property type="protein sequence ID" value="ACO83734.1"/>
    <property type="molecule type" value="Genomic_DNA"/>
</dbReference>
<dbReference type="RefSeq" id="WP_003359499.1">
    <property type="nucleotide sequence ID" value="NC_012563.1"/>
</dbReference>
<dbReference type="SMR" id="C1FPJ5"/>
<dbReference type="KEGG" id="cby:CLM_0038"/>
<dbReference type="eggNOG" id="COG0718">
    <property type="taxonomic scope" value="Bacteria"/>
</dbReference>
<dbReference type="HOGENOM" id="CLU_140930_1_0_9"/>
<dbReference type="Proteomes" id="UP000001374">
    <property type="component" value="Chromosome"/>
</dbReference>
<dbReference type="GO" id="GO:0043590">
    <property type="term" value="C:bacterial nucleoid"/>
    <property type="evidence" value="ECO:0007669"/>
    <property type="project" value="UniProtKB-UniRule"/>
</dbReference>
<dbReference type="GO" id="GO:0005829">
    <property type="term" value="C:cytosol"/>
    <property type="evidence" value="ECO:0007669"/>
    <property type="project" value="TreeGrafter"/>
</dbReference>
<dbReference type="GO" id="GO:0003677">
    <property type="term" value="F:DNA binding"/>
    <property type="evidence" value="ECO:0007669"/>
    <property type="project" value="UniProtKB-UniRule"/>
</dbReference>
<dbReference type="FunFam" id="3.30.1310.10:FF:000002">
    <property type="entry name" value="Nucleoid-associated protein IKC_06587"/>
    <property type="match status" value="1"/>
</dbReference>
<dbReference type="Gene3D" id="3.30.1310.10">
    <property type="entry name" value="Nucleoid-associated protein YbaB-like domain"/>
    <property type="match status" value="1"/>
</dbReference>
<dbReference type="HAMAP" id="MF_00274">
    <property type="entry name" value="DNA_YbaB_EbfC"/>
    <property type="match status" value="1"/>
</dbReference>
<dbReference type="InterPro" id="IPR036894">
    <property type="entry name" value="YbaB-like_sf"/>
</dbReference>
<dbReference type="InterPro" id="IPR004401">
    <property type="entry name" value="YbaB/EbfC"/>
</dbReference>
<dbReference type="NCBIfam" id="TIGR00103">
    <property type="entry name" value="DNA_YbaB_EbfC"/>
    <property type="match status" value="1"/>
</dbReference>
<dbReference type="PANTHER" id="PTHR33449">
    <property type="entry name" value="NUCLEOID-ASSOCIATED PROTEIN YBAB"/>
    <property type="match status" value="1"/>
</dbReference>
<dbReference type="PANTHER" id="PTHR33449:SF1">
    <property type="entry name" value="NUCLEOID-ASSOCIATED PROTEIN YBAB"/>
    <property type="match status" value="1"/>
</dbReference>
<dbReference type="Pfam" id="PF02575">
    <property type="entry name" value="YbaB_DNA_bd"/>
    <property type="match status" value="1"/>
</dbReference>
<dbReference type="PIRSF" id="PIRSF004555">
    <property type="entry name" value="UCP004555"/>
    <property type="match status" value="1"/>
</dbReference>
<dbReference type="SUPFAM" id="SSF82607">
    <property type="entry name" value="YbaB-like"/>
    <property type="match status" value="1"/>
</dbReference>
<feature type="chain" id="PRO_1000197651" description="Nucleoid-associated protein CLM_0038">
    <location>
        <begin position="1"/>
        <end position="113"/>
    </location>
</feature>
<feature type="region of interest" description="Disordered" evidence="2">
    <location>
        <begin position="93"/>
        <end position="113"/>
    </location>
</feature>
<feature type="compositionally biased region" description="Basic and acidic residues" evidence="2">
    <location>
        <begin position="93"/>
        <end position="102"/>
    </location>
</feature>
<accession>C1FPJ5</accession>
<reference key="1">
    <citation type="submission" date="2008-10" db="EMBL/GenBank/DDBJ databases">
        <title>Genome sequence of Clostridium botulinum A2 Kyoto.</title>
        <authorList>
            <person name="Shrivastava S."/>
            <person name="Brinkac L.M."/>
            <person name="Brown J.L."/>
            <person name="Bruce D."/>
            <person name="Detter C.C."/>
            <person name="Johnson E.A."/>
            <person name="Munk C.A."/>
            <person name="Smith L.A."/>
            <person name="Smith T.J."/>
            <person name="Sutton G."/>
            <person name="Brettin T.S."/>
        </authorList>
    </citation>
    <scope>NUCLEOTIDE SEQUENCE [LARGE SCALE GENOMIC DNA]</scope>
    <source>
        <strain>Kyoto / Type A2</strain>
    </source>
</reference>
<evidence type="ECO:0000255" key="1">
    <source>
        <dbReference type="HAMAP-Rule" id="MF_00274"/>
    </source>
</evidence>
<evidence type="ECO:0000256" key="2">
    <source>
        <dbReference type="SAM" id="MobiDB-lite"/>
    </source>
</evidence>
<sequence>MARGGFPNMGGANMNNLMKQAQKLQQDMEKMQGEMEKKEFSATVGGGAVTAVANGKKQIVDIKIEPEVVDEDDIEMLEDLIMSACNEALKKAEEDTSSEVKRLTGGMNLPGMF</sequence>
<organism>
    <name type="scientific">Clostridium botulinum (strain Kyoto / Type A2)</name>
    <dbReference type="NCBI Taxonomy" id="536232"/>
    <lineage>
        <taxon>Bacteria</taxon>
        <taxon>Bacillati</taxon>
        <taxon>Bacillota</taxon>
        <taxon>Clostridia</taxon>
        <taxon>Eubacteriales</taxon>
        <taxon>Clostridiaceae</taxon>
        <taxon>Clostridium</taxon>
    </lineage>
</organism>
<protein>
    <recommendedName>
        <fullName evidence="1">Nucleoid-associated protein CLM_0038</fullName>
    </recommendedName>
</protein>
<proteinExistence type="inferred from homology"/>